<evidence type="ECO:0000255" key="1">
    <source>
        <dbReference type="HAMAP-Rule" id="MF_01152"/>
    </source>
</evidence>
<evidence type="ECO:0000256" key="2">
    <source>
        <dbReference type="SAM" id="MobiDB-lite"/>
    </source>
</evidence>
<keyword id="KW-0143">Chaperone</keyword>
<keyword id="KW-0963">Cytoplasm</keyword>
<keyword id="KW-0235">DNA replication</keyword>
<keyword id="KW-0479">Metal-binding</keyword>
<keyword id="KW-1185">Reference proteome</keyword>
<keyword id="KW-0677">Repeat</keyword>
<keyword id="KW-0346">Stress response</keyword>
<keyword id="KW-0862">Zinc</keyword>
<keyword id="KW-0863">Zinc-finger</keyword>
<comment type="function">
    <text evidence="1">Participates actively in the response to hyperosmotic and heat shock by preventing the aggregation of stress-denatured proteins and by disaggregating proteins, also in an autonomous, DnaK-independent fashion. Unfolded proteins bind initially to DnaJ; upon interaction with the DnaJ-bound protein, DnaK hydrolyzes its bound ATP, resulting in the formation of a stable complex. GrpE releases ADP from DnaK; ATP binding to DnaK triggers the release of the substrate protein, thus completing the reaction cycle. Several rounds of ATP-dependent interactions between DnaJ, DnaK and GrpE are required for fully efficient folding. Also involved, together with DnaK and GrpE, in the DNA replication of plasmids through activation of initiation proteins.</text>
</comment>
<comment type="cofactor">
    <cofactor evidence="1">
        <name>Zn(2+)</name>
        <dbReference type="ChEBI" id="CHEBI:29105"/>
    </cofactor>
    <text evidence="1">Binds 2 Zn(2+) ions per monomer.</text>
</comment>
<comment type="subunit">
    <text evidence="1">Homodimer.</text>
</comment>
<comment type="subcellular location">
    <subcellularLocation>
        <location evidence="1">Cytoplasm</location>
    </subcellularLocation>
</comment>
<comment type="domain">
    <text evidence="1">The J domain is necessary and sufficient to stimulate DnaK ATPase activity. Zinc center 1 plays an important role in the autonomous, DnaK-independent chaperone activity of DnaJ. Zinc center 2 is essential for interaction with DnaK and for DnaJ activity.</text>
</comment>
<comment type="similarity">
    <text evidence="1">Belongs to the DnaJ family.</text>
</comment>
<sequence>MADYYETLGVERGASDDEIKKAYRKLSRKYHPDIAGPEFEDKFKEVNNAYDVLSNPDKRRMYDSGVDPNNPNAGAGGFSGAGFGDMSDVFSTFFGSAFGGGSQGPVPRTQPGRDALASASIDLKTAVFGGTAHVKINTFSLCQECGGSGAQGGAQPVTCPDCHGQGFMQKVVRTMLGQMMTSAPCERCEGHGTIIQNPCPSCMGHGRVRTTRTVGVTVPAGINDNARLRLANQGEVGEGGGAAGDLYIDIRIKADKQFTRDGDDLHCWIQVPMSWAVLGHDLSIDTFDGEKTVSIPAGCQTEDTVTLKGLGVTNIRNKDERGNLIAHVNVLIPTKLNETERGLIEQFAASHDSGATHVSQASRPQAGQKKGFFSKLKDALS</sequence>
<reference key="1">
    <citation type="journal article" date="2002" name="Proc. Natl. Acad. Sci. U.S.A.">
        <title>The genome sequence of Bifidobacterium longum reflects its adaptation to the human gastrointestinal tract.</title>
        <authorList>
            <person name="Schell M.A."/>
            <person name="Karmirantzou M."/>
            <person name="Snel B."/>
            <person name="Vilanova D."/>
            <person name="Berger B."/>
            <person name="Pessi G."/>
            <person name="Zwahlen M.-C."/>
            <person name="Desiere F."/>
            <person name="Bork P."/>
            <person name="Delley M."/>
            <person name="Pridmore R.D."/>
            <person name="Arigoni F."/>
        </authorList>
    </citation>
    <scope>NUCLEOTIDE SEQUENCE [LARGE SCALE GENOMIC DNA]</scope>
    <source>
        <strain>NCC 2705</strain>
    </source>
</reference>
<dbReference type="EMBL" id="AE014295">
    <property type="protein sequence ID" value="AAN24537.1"/>
    <property type="molecule type" value="Genomic_DNA"/>
</dbReference>
<dbReference type="RefSeq" id="NP_695901.1">
    <property type="nucleotide sequence ID" value="NC_004307.2"/>
</dbReference>
<dbReference type="RefSeq" id="WP_007052794.1">
    <property type="nucleotide sequence ID" value="NC_004307.2"/>
</dbReference>
<dbReference type="SMR" id="Q8G6C6"/>
<dbReference type="STRING" id="206672.BL0719"/>
<dbReference type="EnsemblBacteria" id="AAN24537">
    <property type="protein sequence ID" value="AAN24537"/>
    <property type="gene ID" value="BL0719"/>
</dbReference>
<dbReference type="KEGG" id="blo:BL0719"/>
<dbReference type="PATRIC" id="fig|206672.9.peg.417"/>
<dbReference type="HOGENOM" id="CLU_017633_0_7_11"/>
<dbReference type="OrthoDB" id="9779889at2"/>
<dbReference type="PhylomeDB" id="Q8G6C6"/>
<dbReference type="Proteomes" id="UP000000439">
    <property type="component" value="Chromosome"/>
</dbReference>
<dbReference type="GO" id="GO:0005737">
    <property type="term" value="C:cytoplasm"/>
    <property type="evidence" value="ECO:0007669"/>
    <property type="project" value="UniProtKB-SubCell"/>
</dbReference>
<dbReference type="GO" id="GO:0005524">
    <property type="term" value="F:ATP binding"/>
    <property type="evidence" value="ECO:0007669"/>
    <property type="project" value="InterPro"/>
</dbReference>
<dbReference type="GO" id="GO:0031072">
    <property type="term" value="F:heat shock protein binding"/>
    <property type="evidence" value="ECO:0007669"/>
    <property type="project" value="InterPro"/>
</dbReference>
<dbReference type="GO" id="GO:0051082">
    <property type="term" value="F:unfolded protein binding"/>
    <property type="evidence" value="ECO:0007669"/>
    <property type="project" value="UniProtKB-UniRule"/>
</dbReference>
<dbReference type="GO" id="GO:0008270">
    <property type="term" value="F:zinc ion binding"/>
    <property type="evidence" value="ECO:0007669"/>
    <property type="project" value="UniProtKB-UniRule"/>
</dbReference>
<dbReference type="GO" id="GO:0051085">
    <property type="term" value="P:chaperone cofactor-dependent protein refolding"/>
    <property type="evidence" value="ECO:0007669"/>
    <property type="project" value="TreeGrafter"/>
</dbReference>
<dbReference type="GO" id="GO:0006260">
    <property type="term" value="P:DNA replication"/>
    <property type="evidence" value="ECO:0007669"/>
    <property type="project" value="UniProtKB-KW"/>
</dbReference>
<dbReference type="GO" id="GO:0042026">
    <property type="term" value="P:protein refolding"/>
    <property type="evidence" value="ECO:0007669"/>
    <property type="project" value="TreeGrafter"/>
</dbReference>
<dbReference type="GO" id="GO:0009408">
    <property type="term" value="P:response to heat"/>
    <property type="evidence" value="ECO:0007669"/>
    <property type="project" value="InterPro"/>
</dbReference>
<dbReference type="CDD" id="cd06257">
    <property type="entry name" value="DnaJ"/>
    <property type="match status" value="1"/>
</dbReference>
<dbReference type="CDD" id="cd10747">
    <property type="entry name" value="DnaJ_C"/>
    <property type="match status" value="1"/>
</dbReference>
<dbReference type="CDD" id="cd10719">
    <property type="entry name" value="DnaJ_zf"/>
    <property type="match status" value="1"/>
</dbReference>
<dbReference type="FunFam" id="2.60.260.20:FF:000005">
    <property type="entry name" value="Chaperone protein dnaJ 1, mitochondrial"/>
    <property type="match status" value="1"/>
</dbReference>
<dbReference type="FunFam" id="2.10.230.10:FF:000002">
    <property type="entry name" value="Molecular chaperone DnaJ"/>
    <property type="match status" value="1"/>
</dbReference>
<dbReference type="Gene3D" id="1.10.287.110">
    <property type="entry name" value="DnaJ domain"/>
    <property type="match status" value="1"/>
</dbReference>
<dbReference type="Gene3D" id="2.10.230.10">
    <property type="entry name" value="Heat shock protein DnaJ, cysteine-rich domain"/>
    <property type="match status" value="1"/>
</dbReference>
<dbReference type="Gene3D" id="2.60.260.20">
    <property type="entry name" value="Urease metallochaperone UreE, N-terminal domain"/>
    <property type="match status" value="2"/>
</dbReference>
<dbReference type="HAMAP" id="MF_01152">
    <property type="entry name" value="DnaJ"/>
    <property type="match status" value="1"/>
</dbReference>
<dbReference type="InterPro" id="IPR012724">
    <property type="entry name" value="DnaJ"/>
</dbReference>
<dbReference type="InterPro" id="IPR002939">
    <property type="entry name" value="DnaJ_C"/>
</dbReference>
<dbReference type="InterPro" id="IPR001623">
    <property type="entry name" value="DnaJ_domain"/>
</dbReference>
<dbReference type="InterPro" id="IPR018253">
    <property type="entry name" value="DnaJ_domain_CS"/>
</dbReference>
<dbReference type="InterPro" id="IPR008971">
    <property type="entry name" value="HSP40/DnaJ_pept-bd"/>
</dbReference>
<dbReference type="InterPro" id="IPR001305">
    <property type="entry name" value="HSP_DnaJ_Cys-rich_dom"/>
</dbReference>
<dbReference type="InterPro" id="IPR036410">
    <property type="entry name" value="HSP_DnaJ_Cys-rich_dom_sf"/>
</dbReference>
<dbReference type="InterPro" id="IPR036869">
    <property type="entry name" value="J_dom_sf"/>
</dbReference>
<dbReference type="NCBIfam" id="NF008035">
    <property type="entry name" value="PRK10767.1"/>
    <property type="match status" value="1"/>
</dbReference>
<dbReference type="PANTHER" id="PTHR43096:SF48">
    <property type="entry name" value="CHAPERONE PROTEIN DNAJ"/>
    <property type="match status" value="1"/>
</dbReference>
<dbReference type="PANTHER" id="PTHR43096">
    <property type="entry name" value="DNAJ HOMOLOG 1, MITOCHONDRIAL-RELATED"/>
    <property type="match status" value="1"/>
</dbReference>
<dbReference type="Pfam" id="PF00226">
    <property type="entry name" value="DnaJ"/>
    <property type="match status" value="1"/>
</dbReference>
<dbReference type="Pfam" id="PF01556">
    <property type="entry name" value="DnaJ_C"/>
    <property type="match status" value="1"/>
</dbReference>
<dbReference type="Pfam" id="PF00684">
    <property type="entry name" value="DnaJ_CXXCXGXG"/>
    <property type="match status" value="1"/>
</dbReference>
<dbReference type="PRINTS" id="PR00625">
    <property type="entry name" value="JDOMAIN"/>
</dbReference>
<dbReference type="SMART" id="SM00271">
    <property type="entry name" value="DnaJ"/>
    <property type="match status" value="1"/>
</dbReference>
<dbReference type="SUPFAM" id="SSF46565">
    <property type="entry name" value="Chaperone J-domain"/>
    <property type="match status" value="1"/>
</dbReference>
<dbReference type="SUPFAM" id="SSF57938">
    <property type="entry name" value="DnaJ/Hsp40 cysteine-rich domain"/>
    <property type="match status" value="1"/>
</dbReference>
<dbReference type="SUPFAM" id="SSF49493">
    <property type="entry name" value="HSP40/DnaJ peptide-binding domain"/>
    <property type="match status" value="2"/>
</dbReference>
<dbReference type="PROSITE" id="PS00636">
    <property type="entry name" value="DNAJ_1"/>
    <property type="match status" value="1"/>
</dbReference>
<dbReference type="PROSITE" id="PS50076">
    <property type="entry name" value="DNAJ_2"/>
    <property type="match status" value="1"/>
</dbReference>
<dbReference type="PROSITE" id="PS51188">
    <property type="entry name" value="ZF_CR"/>
    <property type="match status" value="1"/>
</dbReference>
<protein>
    <recommendedName>
        <fullName evidence="1">Chaperone protein DnaJ</fullName>
    </recommendedName>
</protein>
<proteinExistence type="inferred from homology"/>
<feature type="chain" id="PRO_0000070733" description="Chaperone protein DnaJ">
    <location>
        <begin position="1"/>
        <end position="381"/>
    </location>
</feature>
<feature type="domain" description="J" evidence="1">
    <location>
        <begin position="3"/>
        <end position="66"/>
    </location>
</feature>
<feature type="repeat" description="CXXCXGXG motif">
    <location>
        <begin position="142"/>
        <end position="149"/>
    </location>
</feature>
<feature type="repeat" description="CXXCXGXG motif">
    <location>
        <begin position="159"/>
        <end position="166"/>
    </location>
</feature>
<feature type="repeat" description="CXXCXGXG motif">
    <location>
        <begin position="185"/>
        <end position="192"/>
    </location>
</feature>
<feature type="repeat" description="CXXCXGXG motif">
    <location>
        <begin position="199"/>
        <end position="206"/>
    </location>
</feature>
<feature type="zinc finger region" description="CR-type" evidence="1">
    <location>
        <begin position="129"/>
        <end position="211"/>
    </location>
</feature>
<feature type="region of interest" description="Disordered" evidence="2">
    <location>
        <begin position="355"/>
        <end position="381"/>
    </location>
</feature>
<feature type="compositionally biased region" description="Polar residues" evidence="2">
    <location>
        <begin position="356"/>
        <end position="365"/>
    </location>
</feature>
<feature type="binding site" evidence="1">
    <location>
        <position position="142"/>
    </location>
    <ligand>
        <name>Zn(2+)</name>
        <dbReference type="ChEBI" id="CHEBI:29105"/>
        <label>1</label>
    </ligand>
</feature>
<feature type="binding site" evidence="1">
    <location>
        <position position="145"/>
    </location>
    <ligand>
        <name>Zn(2+)</name>
        <dbReference type="ChEBI" id="CHEBI:29105"/>
        <label>1</label>
    </ligand>
</feature>
<feature type="binding site" evidence="1">
    <location>
        <position position="159"/>
    </location>
    <ligand>
        <name>Zn(2+)</name>
        <dbReference type="ChEBI" id="CHEBI:29105"/>
        <label>2</label>
    </ligand>
</feature>
<feature type="binding site" evidence="1">
    <location>
        <position position="162"/>
    </location>
    <ligand>
        <name>Zn(2+)</name>
        <dbReference type="ChEBI" id="CHEBI:29105"/>
        <label>2</label>
    </ligand>
</feature>
<feature type="binding site" evidence="1">
    <location>
        <position position="185"/>
    </location>
    <ligand>
        <name>Zn(2+)</name>
        <dbReference type="ChEBI" id="CHEBI:29105"/>
        <label>2</label>
    </ligand>
</feature>
<feature type="binding site" evidence="1">
    <location>
        <position position="188"/>
    </location>
    <ligand>
        <name>Zn(2+)</name>
        <dbReference type="ChEBI" id="CHEBI:29105"/>
        <label>2</label>
    </ligand>
</feature>
<feature type="binding site" evidence="1">
    <location>
        <position position="199"/>
    </location>
    <ligand>
        <name>Zn(2+)</name>
        <dbReference type="ChEBI" id="CHEBI:29105"/>
        <label>1</label>
    </ligand>
</feature>
<feature type="binding site" evidence="1">
    <location>
        <position position="202"/>
    </location>
    <ligand>
        <name>Zn(2+)</name>
        <dbReference type="ChEBI" id="CHEBI:29105"/>
        <label>1</label>
    </ligand>
</feature>
<name>DNAJ_BIFLO</name>
<accession>Q8G6C6</accession>
<gene>
    <name evidence="1" type="primary">dnaJ</name>
    <name type="ordered locus">BL0719</name>
</gene>
<organism>
    <name type="scientific">Bifidobacterium longum (strain NCC 2705)</name>
    <dbReference type="NCBI Taxonomy" id="206672"/>
    <lineage>
        <taxon>Bacteria</taxon>
        <taxon>Bacillati</taxon>
        <taxon>Actinomycetota</taxon>
        <taxon>Actinomycetes</taxon>
        <taxon>Bifidobacteriales</taxon>
        <taxon>Bifidobacteriaceae</taxon>
        <taxon>Bifidobacterium</taxon>
    </lineage>
</organism>